<comment type="function">
    <text evidence="1">With S4 and S12 plays an important role in translational accuracy.</text>
</comment>
<comment type="function">
    <text evidence="1">Located at the back of the 30S subunit body where it stabilizes the conformation of the head with respect to the body.</text>
</comment>
<comment type="subunit">
    <text evidence="1">Part of the 30S ribosomal subunit. Contacts proteins S4 and S8.</text>
</comment>
<comment type="domain">
    <text>The N-terminal domain interacts with the head of the 30S subunit; the C-terminal domain interacts with the body and contacts protein S4. The interaction surface between S4 and S5 is involved in control of translational fidelity.</text>
</comment>
<comment type="similarity">
    <text evidence="1">Belongs to the universal ribosomal protein uS5 family.</text>
</comment>
<name>RS5_LACDA</name>
<dbReference type="EMBL" id="CR954253">
    <property type="protein sequence ID" value="CAI97248.1"/>
    <property type="molecule type" value="Genomic_DNA"/>
</dbReference>
<dbReference type="RefSeq" id="WP_003620849.1">
    <property type="nucleotide sequence ID" value="NZ_JQAV01000001.1"/>
</dbReference>
<dbReference type="SMR" id="Q1GBK1"/>
<dbReference type="STRING" id="390333.Ldb0413"/>
<dbReference type="KEGG" id="ldb:Ldb0413"/>
<dbReference type="PATRIC" id="fig|390333.13.peg.378"/>
<dbReference type="eggNOG" id="COG0098">
    <property type="taxonomic scope" value="Bacteria"/>
</dbReference>
<dbReference type="HOGENOM" id="CLU_065898_2_2_9"/>
<dbReference type="BioCyc" id="LDEL390333:LDB_RS01755-MONOMER"/>
<dbReference type="Proteomes" id="UP000001259">
    <property type="component" value="Chromosome"/>
</dbReference>
<dbReference type="GO" id="GO:0015935">
    <property type="term" value="C:small ribosomal subunit"/>
    <property type="evidence" value="ECO:0007669"/>
    <property type="project" value="InterPro"/>
</dbReference>
<dbReference type="GO" id="GO:0019843">
    <property type="term" value="F:rRNA binding"/>
    <property type="evidence" value="ECO:0007669"/>
    <property type="project" value="UniProtKB-UniRule"/>
</dbReference>
<dbReference type="GO" id="GO:0003735">
    <property type="term" value="F:structural constituent of ribosome"/>
    <property type="evidence" value="ECO:0007669"/>
    <property type="project" value="InterPro"/>
</dbReference>
<dbReference type="GO" id="GO:0006412">
    <property type="term" value="P:translation"/>
    <property type="evidence" value="ECO:0007669"/>
    <property type="project" value="UniProtKB-UniRule"/>
</dbReference>
<dbReference type="FunFam" id="3.30.160.20:FF:000001">
    <property type="entry name" value="30S ribosomal protein S5"/>
    <property type="match status" value="1"/>
</dbReference>
<dbReference type="FunFam" id="3.30.230.10:FF:000002">
    <property type="entry name" value="30S ribosomal protein S5"/>
    <property type="match status" value="1"/>
</dbReference>
<dbReference type="Gene3D" id="3.30.160.20">
    <property type="match status" value="1"/>
</dbReference>
<dbReference type="Gene3D" id="3.30.230.10">
    <property type="match status" value="1"/>
</dbReference>
<dbReference type="HAMAP" id="MF_01307_B">
    <property type="entry name" value="Ribosomal_uS5_B"/>
    <property type="match status" value="1"/>
</dbReference>
<dbReference type="InterPro" id="IPR020568">
    <property type="entry name" value="Ribosomal_Su5_D2-typ_SF"/>
</dbReference>
<dbReference type="InterPro" id="IPR000851">
    <property type="entry name" value="Ribosomal_uS5"/>
</dbReference>
<dbReference type="InterPro" id="IPR005712">
    <property type="entry name" value="Ribosomal_uS5_bac-type"/>
</dbReference>
<dbReference type="InterPro" id="IPR005324">
    <property type="entry name" value="Ribosomal_uS5_C"/>
</dbReference>
<dbReference type="InterPro" id="IPR013810">
    <property type="entry name" value="Ribosomal_uS5_N"/>
</dbReference>
<dbReference type="InterPro" id="IPR018192">
    <property type="entry name" value="Ribosomal_uS5_N_CS"/>
</dbReference>
<dbReference type="InterPro" id="IPR014721">
    <property type="entry name" value="Ribsml_uS5_D2-typ_fold_subgr"/>
</dbReference>
<dbReference type="NCBIfam" id="TIGR01021">
    <property type="entry name" value="rpsE_bact"/>
    <property type="match status" value="1"/>
</dbReference>
<dbReference type="PANTHER" id="PTHR48277">
    <property type="entry name" value="MITOCHONDRIAL RIBOSOMAL PROTEIN S5"/>
    <property type="match status" value="1"/>
</dbReference>
<dbReference type="PANTHER" id="PTHR48277:SF1">
    <property type="entry name" value="MITOCHONDRIAL RIBOSOMAL PROTEIN S5"/>
    <property type="match status" value="1"/>
</dbReference>
<dbReference type="Pfam" id="PF00333">
    <property type="entry name" value="Ribosomal_S5"/>
    <property type="match status" value="1"/>
</dbReference>
<dbReference type="Pfam" id="PF03719">
    <property type="entry name" value="Ribosomal_S5_C"/>
    <property type="match status" value="1"/>
</dbReference>
<dbReference type="SUPFAM" id="SSF54768">
    <property type="entry name" value="dsRNA-binding domain-like"/>
    <property type="match status" value="1"/>
</dbReference>
<dbReference type="SUPFAM" id="SSF54211">
    <property type="entry name" value="Ribosomal protein S5 domain 2-like"/>
    <property type="match status" value="1"/>
</dbReference>
<dbReference type="PROSITE" id="PS00585">
    <property type="entry name" value="RIBOSOMAL_S5"/>
    <property type="match status" value="1"/>
</dbReference>
<dbReference type="PROSITE" id="PS50881">
    <property type="entry name" value="S5_DSRBD"/>
    <property type="match status" value="1"/>
</dbReference>
<evidence type="ECO:0000255" key="1">
    <source>
        <dbReference type="HAMAP-Rule" id="MF_01307"/>
    </source>
</evidence>
<evidence type="ECO:0000305" key="2"/>
<gene>
    <name evidence="1" type="primary">rpsE</name>
    <name type="ordered locus">Ldb0413</name>
</gene>
<feature type="chain" id="PRO_0000323140" description="Small ribosomal subunit protein uS5">
    <location>
        <begin position="1"/>
        <end position="170"/>
    </location>
</feature>
<feature type="domain" description="S5 DRBM" evidence="1">
    <location>
        <begin position="16"/>
        <end position="79"/>
    </location>
</feature>
<organism>
    <name type="scientific">Lactobacillus delbrueckii subsp. bulgaricus (strain ATCC 11842 / DSM 20081 / BCRC 10696 / JCM 1002 / NBRC 13953 / NCIMB 11778 / NCTC 12712 / WDCM 00102 / Lb 14)</name>
    <dbReference type="NCBI Taxonomy" id="390333"/>
    <lineage>
        <taxon>Bacteria</taxon>
        <taxon>Bacillati</taxon>
        <taxon>Bacillota</taxon>
        <taxon>Bacilli</taxon>
        <taxon>Lactobacillales</taxon>
        <taxon>Lactobacillaceae</taxon>
        <taxon>Lactobacillus</taxon>
    </lineage>
</organism>
<proteinExistence type="inferred from homology"/>
<accession>Q1GBK1</accession>
<sequence length="170" mass="18006">MANRNDSKNRRNKDDIEDQLVAINRITKVVKGGRRQRFAALVVVGDKKGHVGFGTGKATEVPEAIRKAVEAGKKNMISVPTVGTTIPHEVLGHYGSGNVLLKPAEAGSGIAAGGAVRIVMDMAGIGDVTSKSLGSNTPINVIRATIDGLQKLKTREDVLKLRESAKSLQD</sequence>
<protein>
    <recommendedName>
        <fullName evidence="1">Small ribosomal subunit protein uS5</fullName>
    </recommendedName>
    <alternativeName>
        <fullName evidence="2">30S ribosomal protein S5</fullName>
    </alternativeName>
</protein>
<keyword id="KW-1185">Reference proteome</keyword>
<keyword id="KW-0687">Ribonucleoprotein</keyword>
<keyword id="KW-0689">Ribosomal protein</keyword>
<keyword id="KW-0694">RNA-binding</keyword>
<keyword id="KW-0699">rRNA-binding</keyword>
<reference key="1">
    <citation type="journal article" date="2006" name="Proc. Natl. Acad. Sci. U.S.A.">
        <title>The complete genome sequence of Lactobacillus bulgaricus reveals extensive and ongoing reductive evolution.</title>
        <authorList>
            <person name="van de Guchte M."/>
            <person name="Penaud S."/>
            <person name="Grimaldi C."/>
            <person name="Barbe V."/>
            <person name="Bryson K."/>
            <person name="Nicolas P."/>
            <person name="Robert C."/>
            <person name="Oztas S."/>
            <person name="Mangenot S."/>
            <person name="Couloux A."/>
            <person name="Loux V."/>
            <person name="Dervyn R."/>
            <person name="Bossy R."/>
            <person name="Bolotin A."/>
            <person name="Batto J.-M."/>
            <person name="Walunas T."/>
            <person name="Gibrat J.-F."/>
            <person name="Bessieres P."/>
            <person name="Weissenbach J."/>
            <person name="Ehrlich S.D."/>
            <person name="Maguin E."/>
        </authorList>
    </citation>
    <scope>NUCLEOTIDE SEQUENCE [LARGE SCALE GENOMIC DNA]</scope>
    <source>
        <strain>ATCC 11842 / DSM 20081 / BCRC 10696 / JCM 1002 / NBRC 13953 / NCIMB 11778 / NCTC 12712 / WDCM 00102 / Lb 14</strain>
    </source>
</reference>